<evidence type="ECO:0000250" key="1"/>
<evidence type="ECO:0000305" key="2"/>
<name>LEUD_AZOVI</name>
<dbReference type="EC" id="4.2.1.33"/>
<dbReference type="EMBL" id="Y11280">
    <property type="protein sequence ID" value="CAA72150.1"/>
    <property type="molecule type" value="Genomic_DNA"/>
</dbReference>
<dbReference type="RefSeq" id="WP_012701956.1">
    <property type="nucleotide sequence ID" value="NZ_FPKM01000004.1"/>
</dbReference>
<dbReference type="SMR" id="P96196"/>
<dbReference type="GeneID" id="88186437"/>
<dbReference type="OMA" id="FGQHLFH"/>
<dbReference type="UniPathway" id="UPA00048">
    <property type="reaction ID" value="UER00071"/>
</dbReference>
<dbReference type="GO" id="GO:0009316">
    <property type="term" value="C:3-isopropylmalate dehydratase complex"/>
    <property type="evidence" value="ECO:0007669"/>
    <property type="project" value="InterPro"/>
</dbReference>
<dbReference type="GO" id="GO:0003861">
    <property type="term" value="F:3-isopropylmalate dehydratase activity"/>
    <property type="evidence" value="ECO:0007669"/>
    <property type="project" value="UniProtKB-UniRule"/>
</dbReference>
<dbReference type="GO" id="GO:0009098">
    <property type="term" value="P:L-leucine biosynthetic process"/>
    <property type="evidence" value="ECO:0007669"/>
    <property type="project" value="UniProtKB-UniRule"/>
</dbReference>
<dbReference type="CDD" id="cd01577">
    <property type="entry name" value="IPMI_Swivel"/>
    <property type="match status" value="1"/>
</dbReference>
<dbReference type="FunFam" id="3.20.19.10:FF:000003">
    <property type="entry name" value="3-isopropylmalate dehydratase small subunit"/>
    <property type="match status" value="1"/>
</dbReference>
<dbReference type="Gene3D" id="3.20.19.10">
    <property type="entry name" value="Aconitase, domain 4"/>
    <property type="match status" value="1"/>
</dbReference>
<dbReference type="HAMAP" id="MF_01031">
    <property type="entry name" value="LeuD_type1"/>
    <property type="match status" value="1"/>
</dbReference>
<dbReference type="InterPro" id="IPR004431">
    <property type="entry name" value="3-IsopropMal_deHydase_ssu"/>
</dbReference>
<dbReference type="InterPro" id="IPR015928">
    <property type="entry name" value="Aconitase/3IPM_dehydase_swvl"/>
</dbReference>
<dbReference type="InterPro" id="IPR000573">
    <property type="entry name" value="AconitaseA/IPMdHydase_ssu_swvl"/>
</dbReference>
<dbReference type="InterPro" id="IPR033940">
    <property type="entry name" value="IPMI_Swivel"/>
</dbReference>
<dbReference type="InterPro" id="IPR050075">
    <property type="entry name" value="LeuD"/>
</dbReference>
<dbReference type="NCBIfam" id="TIGR00171">
    <property type="entry name" value="leuD"/>
    <property type="match status" value="1"/>
</dbReference>
<dbReference type="NCBIfam" id="NF002458">
    <property type="entry name" value="PRK01641.1"/>
    <property type="match status" value="1"/>
</dbReference>
<dbReference type="PANTHER" id="PTHR43345:SF5">
    <property type="entry name" value="3-ISOPROPYLMALATE DEHYDRATASE SMALL SUBUNIT"/>
    <property type="match status" value="1"/>
</dbReference>
<dbReference type="PANTHER" id="PTHR43345">
    <property type="entry name" value="3-ISOPROPYLMALATE DEHYDRATASE SMALL SUBUNIT 2-RELATED-RELATED"/>
    <property type="match status" value="1"/>
</dbReference>
<dbReference type="Pfam" id="PF00694">
    <property type="entry name" value="Aconitase_C"/>
    <property type="match status" value="1"/>
</dbReference>
<dbReference type="SUPFAM" id="SSF52016">
    <property type="entry name" value="LeuD/IlvD-like"/>
    <property type="match status" value="1"/>
</dbReference>
<feature type="chain" id="PRO_0000141775" description="3-isopropylmalate dehydratase small subunit">
    <location>
        <begin position="1"/>
        <end position="215"/>
    </location>
</feature>
<proteinExistence type="inferred from homology"/>
<accession>P96196</accession>
<protein>
    <recommendedName>
        <fullName>3-isopropylmalate dehydratase small subunit</fullName>
        <ecNumber>4.2.1.33</ecNumber>
    </recommendedName>
    <alternativeName>
        <fullName>Alpha-IPM isomerase</fullName>
        <shortName>IPMI</shortName>
    </alternativeName>
    <alternativeName>
        <fullName>Isopropylmalate isomerase</fullName>
    </alternativeName>
</protein>
<comment type="function">
    <text evidence="1">Catalyzes the isomerization between 2-isopropylmalate and 3-isopropylmalate, via the formation of 2-isopropylmaleate.</text>
</comment>
<comment type="catalytic activity">
    <reaction>
        <text>(2R,3S)-3-isopropylmalate = (2S)-2-isopropylmalate</text>
        <dbReference type="Rhea" id="RHEA:32287"/>
        <dbReference type="ChEBI" id="CHEBI:1178"/>
        <dbReference type="ChEBI" id="CHEBI:35121"/>
        <dbReference type="EC" id="4.2.1.33"/>
    </reaction>
</comment>
<comment type="pathway">
    <text>Amino-acid biosynthesis; L-leucine biosynthesis; L-leucine from 3-methyl-2-oxobutanoate: step 2/4.</text>
</comment>
<comment type="subunit">
    <text>Heterodimer of LeuC and LeuD.</text>
</comment>
<comment type="similarity">
    <text evidence="2">Belongs to the LeuD family. LeuD type 1 subfamily.</text>
</comment>
<sequence>MKAFTQHTGLVAPLDRANVDTDQIIPKQFLKSIKRTGFGPNLFDEWRYLDVGQPGQDCSARPLNTGFVLNLPRYQGASVLLARENFGCGSSREHAPWALDEYGFRTVIAPSFADIFFNNSFKNGLLPIILPEAEVDELFRQCESTEGYRLTVDLAAQTVTRPDGKALSFEIDPFRKHCLLNGLDDIGLTLRDADAIRVFEEKHRQASPWLFGAIK</sequence>
<gene>
    <name type="primary">leuD</name>
</gene>
<organism>
    <name type="scientific">Azotobacter vinelandii</name>
    <dbReference type="NCBI Taxonomy" id="354"/>
    <lineage>
        <taxon>Bacteria</taxon>
        <taxon>Pseudomonadati</taxon>
        <taxon>Pseudomonadota</taxon>
        <taxon>Gammaproteobacteria</taxon>
        <taxon>Pseudomonadales</taxon>
        <taxon>Pseudomonadaceae</taxon>
        <taxon>Azotobacter</taxon>
    </lineage>
</organism>
<keyword id="KW-0028">Amino-acid biosynthesis</keyword>
<keyword id="KW-0100">Branched-chain amino acid biosynthesis</keyword>
<keyword id="KW-0432">Leucine biosynthesis</keyword>
<keyword id="KW-0456">Lyase</keyword>
<reference key="1">
    <citation type="journal article" date="1997" name="Mol. Gen. Genet.">
        <title>Characterization and mutagenesis of the leucine biosynthetic genes of Azotobacter vinelandii: an analysis of the rarity of amino acid auxotrophs.</title>
        <authorList>
            <person name="Manna A.C."/>
            <person name="Das H.K."/>
        </authorList>
    </citation>
    <scope>NUCLEOTIDE SEQUENCE [GENOMIC DNA]</scope>
    <source>
        <strain>ATCC 13705 / OP1 / DSM 366 / NCIMB 11614 / LMG 3878 / UW</strain>
    </source>
</reference>